<dbReference type="EC" id="3.5.4.19" evidence="1"/>
<dbReference type="EMBL" id="CP000780">
    <property type="protein sequence ID" value="ABS56431.1"/>
    <property type="molecule type" value="Genomic_DNA"/>
</dbReference>
<dbReference type="RefSeq" id="WP_012107484.1">
    <property type="nucleotide sequence ID" value="NC_009712.1"/>
</dbReference>
<dbReference type="SMR" id="A7I9M0"/>
<dbReference type="STRING" id="456442.Mboo_1916"/>
<dbReference type="GeneID" id="5410114"/>
<dbReference type="KEGG" id="mbn:Mboo_1916"/>
<dbReference type="eggNOG" id="arCOG02676">
    <property type="taxonomic scope" value="Archaea"/>
</dbReference>
<dbReference type="HOGENOM" id="CLU_048577_5_0_2"/>
<dbReference type="OrthoDB" id="5853at2157"/>
<dbReference type="UniPathway" id="UPA00031">
    <property type="reaction ID" value="UER00008"/>
</dbReference>
<dbReference type="Proteomes" id="UP000002408">
    <property type="component" value="Chromosome"/>
</dbReference>
<dbReference type="GO" id="GO:0005737">
    <property type="term" value="C:cytoplasm"/>
    <property type="evidence" value="ECO:0007669"/>
    <property type="project" value="UniProtKB-SubCell"/>
</dbReference>
<dbReference type="GO" id="GO:0000287">
    <property type="term" value="F:magnesium ion binding"/>
    <property type="evidence" value="ECO:0007669"/>
    <property type="project" value="UniProtKB-UniRule"/>
</dbReference>
<dbReference type="GO" id="GO:0004635">
    <property type="term" value="F:phosphoribosyl-AMP cyclohydrolase activity"/>
    <property type="evidence" value="ECO:0007669"/>
    <property type="project" value="UniProtKB-UniRule"/>
</dbReference>
<dbReference type="GO" id="GO:0008270">
    <property type="term" value="F:zinc ion binding"/>
    <property type="evidence" value="ECO:0007669"/>
    <property type="project" value="UniProtKB-UniRule"/>
</dbReference>
<dbReference type="GO" id="GO:0000105">
    <property type="term" value="P:L-histidine biosynthetic process"/>
    <property type="evidence" value="ECO:0007669"/>
    <property type="project" value="UniProtKB-UniRule"/>
</dbReference>
<dbReference type="FunFam" id="3.10.20.810:FF:000001">
    <property type="entry name" value="Histidine biosynthesis bifunctional protein HisIE"/>
    <property type="match status" value="1"/>
</dbReference>
<dbReference type="Gene3D" id="4.10.80.70">
    <property type="match status" value="1"/>
</dbReference>
<dbReference type="Gene3D" id="3.10.20.810">
    <property type="entry name" value="Phosphoribosyl-AMP cyclohydrolase"/>
    <property type="match status" value="1"/>
</dbReference>
<dbReference type="HAMAP" id="MF_01021">
    <property type="entry name" value="HisI"/>
    <property type="match status" value="1"/>
</dbReference>
<dbReference type="InterPro" id="IPR026660">
    <property type="entry name" value="PRA-CH"/>
</dbReference>
<dbReference type="InterPro" id="IPR002496">
    <property type="entry name" value="PRib_AMP_CycHydrolase_dom"/>
</dbReference>
<dbReference type="InterPro" id="IPR038019">
    <property type="entry name" value="PRib_AMP_CycHydrolase_sf"/>
</dbReference>
<dbReference type="NCBIfam" id="NF000768">
    <property type="entry name" value="PRK00051.1"/>
    <property type="match status" value="1"/>
</dbReference>
<dbReference type="PANTHER" id="PTHR42945">
    <property type="entry name" value="HISTIDINE BIOSYNTHESIS BIFUNCTIONAL PROTEIN"/>
    <property type="match status" value="1"/>
</dbReference>
<dbReference type="PANTHER" id="PTHR42945:SF1">
    <property type="entry name" value="HISTIDINE BIOSYNTHESIS BIFUNCTIONAL PROTEIN HIS7"/>
    <property type="match status" value="1"/>
</dbReference>
<dbReference type="Pfam" id="PF01502">
    <property type="entry name" value="PRA-CH"/>
    <property type="match status" value="1"/>
</dbReference>
<dbReference type="SUPFAM" id="SSF141734">
    <property type="entry name" value="HisI-like"/>
    <property type="match status" value="1"/>
</dbReference>
<gene>
    <name evidence="1" type="primary">hisI</name>
    <name type="ordered locus">Mboo_1916</name>
</gene>
<sequence>MLPLKFHEGGLIPVIVQDQKTREVLMMAYANEEAVRLTESTGSAHYYSRSRKKIWKKGEESGHFQKVGRILVDCDEDCLIYEVEQTGAACHTGYRTCFYRTLDGVTIGEKIFDPEKVYGKTGH</sequence>
<proteinExistence type="inferred from homology"/>
<accession>A7I9M0</accession>
<protein>
    <recommendedName>
        <fullName evidence="1">Phosphoribosyl-AMP cyclohydrolase</fullName>
        <shortName evidence="1">PRA-CH</shortName>
        <ecNumber evidence="1">3.5.4.19</ecNumber>
    </recommendedName>
</protein>
<feature type="chain" id="PRO_0000319732" description="Phosphoribosyl-AMP cyclohydrolase">
    <location>
        <begin position="1"/>
        <end position="123"/>
    </location>
</feature>
<feature type="binding site" evidence="1">
    <location>
        <position position="73"/>
    </location>
    <ligand>
        <name>Mg(2+)</name>
        <dbReference type="ChEBI" id="CHEBI:18420"/>
    </ligand>
</feature>
<feature type="binding site" evidence="1">
    <location>
        <position position="74"/>
    </location>
    <ligand>
        <name>Zn(2+)</name>
        <dbReference type="ChEBI" id="CHEBI:29105"/>
        <note>ligand shared between dimeric partners</note>
    </ligand>
</feature>
<feature type="binding site" evidence="1">
    <location>
        <position position="75"/>
    </location>
    <ligand>
        <name>Mg(2+)</name>
        <dbReference type="ChEBI" id="CHEBI:18420"/>
    </ligand>
</feature>
<feature type="binding site" evidence="1">
    <location>
        <position position="77"/>
    </location>
    <ligand>
        <name>Mg(2+)</name>
        <dbReference type="ChEBI" id="CHEBI:18420"/>
    </ligand>
</feature>
<feature type="binding site" evidence="1">
    <location>
        <position position="90"/>
    </location>
    <ligand>
        <name>Zn(2+)</name>
        <dbReference type="ChEBI" id="CHEBI:29105"/>
        <note>ligand shared between dimeric partners</note>
    </ligand>
</feature>
<feature type="binding site" evidence="1">
    <location>
        <position position="97"/>
    </location>
    <ligand>
        <name>Zn(2+)</name>
        <dbReference type="ChEBI" id="CHEBI:29105"/>
        <note>ligand shared between dimeric partners</note>
    </ligand>
</feature>
<reference key="1">
    <citation type="journal article" date="2015" name="Microbiology">
        <title>Genome of Methanoregula boonei 6A8 reveals adaptations to oligotrophic peatland environments.</title>
        <authorList>
            <person name="Braeuer S."/>
            <person name="Cadillo-Quiroz H."/>
            <person name="Kyrpides N."/>
            <person name="Woyke T."/>
            <person name="Goodwin L."/>
            <person name="Detter C."/>
            <person name="Podell S."/>
            <person name="Yavitt J.B."/>
            <person name="Zinder S.H."/>
        </authorList>
    </citation>
    <scope>NUCLEOTIDE SEQUENCE [LARGE SCALE GENOMIC DNA]</scope>
    <source>
        <strain>DSM 21154 / JCM 14090 / 6A8</strain>
    </source>
</reference>
<comment type="function">
    <text evidence="1">Catalyzes the hydrolysis of the adenine ring of phosphoribosyl-AMP.</text>
</comment>
<comment type="catalytic activity">
    <reaction evidence="1">
        <text>1-(5-phospho-beta-D-ribosyl)-5'-AMP + H2O = 1-(5-phospho-beta-D-ribosyl)-5-[(5-phospho-beta-D-ribosylamino)methylideneamino]imidazole-4-carboxamide</text>
        <dbReference type="Rhea" id="RHEA:20049"/>
        <dbReference type="ChEBI" id="CHEBI:15377"/>
        <dbReference type="ChEBI" id="CHEBI:58435"/>
        <dbReference type="ChEBI" id="CHEBI:59457"/>
        <dbReference type="EC" id="3.5.4.19"/>
    </reaction>
</comment>
<comment type="cofactor">
    <cofactor evidence="1">
        <name>Mg(2+)</name>
        <dbReference type="ChEBI" id="CHEBI:18420"/>
    </cofactor>
    <text evidence="1">Binds 1 Mg(2+) ion per subunit.</text>
</comment>
<comment type="cofactor">
    <cofactor evidence="1">
        <name>Zn(2+)</name>
        <dbReference type="ChEBI" id="CHEBI:29105"/>
    </cofactor>
    <text evidence="1">Binds 1 zinc ion per subunit.</text>
</comment>
<comment type="pathway">
    <text evidence="1">Amino-acid biosynthesis; L-histidine biosynthesis; L-histidine from 5-phospho-alpha-D-ribose 1-diphosphate: step 3/9.</text>
</comment>
<comment type="subunit">
    <text evidence="1">Homodimer.</text>
</comment>
<comment type="subcellular location">
    <subcellularLocation>
        <location evidence="1">Cytoplasm</location>
    </subcellularLocation>
</comment>
<comment type="similarity">
    <text evidence="1">Belongs to the PRA-CH family.</text>
</comment>
<keyword id="KW-0028">Amino-acid biosynthesis</keyword>
<keyword id="KW-0963">Cytoplasm</keyword>
<keyword id="KW-0368">Histidine biosynthesis</keyword>
<keyword id="KW-0378">Hydrolase</keyword>
<keyword id="KW-0460">Magnesium</keyword>
<keyword id="KW-0479">Metal-binding</keyword>
<keyword id="KW-1185">Reference proteome</keyword>
<keyword id="KW-0862">Zinc</keyword>
<organism>
    <name type="scientific">Methanoregula boonei (strain DSM 21154 / JCM 14090 / 6A8)</name>
    <dbReference type="NCBI Taxonomy" id="456442"/>
    <lineage>
        <taxon>Archaea</taxon>
        <taxon>Methanobacteriati</taxon>
        <taxon>Methanobacteriota</taxon>
        <taxon>Stenosarchaea group</taxon>
        <taxon>Methanomicrobia</taxon>
        <taxon>Methanomicrobiales</taxon>
        <taxon>Methanoregulaceae</taxon>
        <taxon>Methanoregula</taxon>
    </lineage>
</organism>
<name>HIS3_METB6</name>
<evidence type="ECO:0000255" key="1">
    <source>
        <dbReference type="HAMAP-Rule" id="MF_01021"/>
    </source>
</evidence>